<accession>Q0W2Y7</accession>
<gene>
    <name evidence="1" type="primary">rrp42</name>
    <name type="ordered locus">UNCMA_09920</name>
    <name type="ORF">RCIX2125</name>
</gene>
<feature type="chain" id="PRO_1000051553" description="Exosome complex component Rrp42">
    <location>
        <begin position="1"/>
        <end position="260"/>
    </location>
</feature>
<keyword id="KW-0963">Cytoplasm</keyword>
<keyword id="KW-0271">Exosome</keyword>
<keyword id="KW-1185">Reference proteome</keyword>
<dbReference type="EMBL" id="AM114193">
    <property type="protein sequence ID" value="CAJ37256.1"/>
    <property type="molecule type" value="Genomic_DNA"/>
</dbReference>
<dbReference type="RefSeq" id="WP_012035320.1">
    <property type="nucleotide sequence ID" value="NC_009464.1"/>
</dbReference>
<dbReference type="SMR" id="Q0W2Y7"/>
<dbReference type="STRING" id="351160.RCIX2125"/>
<dbReference type="GeneID" id="5144518"/>
<dbReference type="KEGG" id="rci:RCIX2125"/>
<dbReference type="PATRIC" id="fig|351160.9.peg.1025"/>
<dbReference type="eggNOG" id="arCOG01574">
    <property type="taxonomic scope" value="Archaea"/>
</dbReference>
<dbReference type="OrthoDB" id="30932at2157"/>
<dbReference type="Proteomes" id="UP000000663">
    <property type="component" value="Chromosome"/>
</dbReference>
<dbReference type="GO" id="GO:0000177">
    <property type="term" value="C:cytoplasmic exosome (RNase complex)"/>
    <property type="evidence" value="ECO:0007669"/>
    <property type="project" value="TreeGrafter"/>
</dbReference>
<dbReference type="GO" id="GO:0035925">
    <property type="term" value="F:mRNA 3'-UTR AU-rich region binding"/>
    <property type="evidence" value="ECO:0007669"/>
    <property type="project" value="TreeGrafter"/>
</dbReference>
<dbReference type="GO" id="GO:0016075">
    <property type="term" value="P:rRNA catabolic process"/>
    <property type="evidence" value="ECO:0007669"/>
    <property type="project" value="TreeGrafter"/>
</dbReference>
<dbReference type="CDD" id="cd11365">
    <property type="entry name" value="RNase_PH_archRRP42"/>
    <property type="match status" value="1"/>
</dbReference>
<dbReference type="FunFam" id="3.30.230.70:FF:000017">
    <property type="entry name" value="Exosome complex component Rrp42"/>
    <property type="match status" value="1"/>
</dbReference>
<dbReference type="Gene3D" id="3.30.230.70">
    <property type="entry name" value="GHMP Kinase, N-terminal domain"/>
    <property type="match status" value="1"/>
</dbReference>
<dbReference type="HAMAP" id="MF_00622">
    <property type="entry name" value="Exosome_Rrp42"/>
    <property type="match status" value="1"/>
</dbReference>
<dbReference type="InterPro" id="IPR001247">
    <property type="entry name" value="ExoRNase_PH_dom1"/>
</dbReference>
<dbReference type="InterPro" id="IPR015847">
    <property type="entry name" value="ExoRNase_PH_dom2"/>
</dbReference>
<dbReference type="InterPro" id="IPR036345">
    <property type="entry name" value="ExoRNase_PH_dom2_sf"/>
</dbReference>
<dbReference type="InterPro" id="IPR050590">
    <property type="entry name" value="Exosome_comp_Rrp42_subfam"/>
</dbReference>
<dbReference type="InterPro" id="IPR027408">
    <property type="entry name" value="PNPase/RNase_PH_dom_sf"/>
</dbReference>
<dbReference type="InterPro" id="IPR020568">
    <property type="entry name" value="Ribosomal_Su5_D2-typ_SF"/>
</dbReference>
<dbReference type="InterPro" id="IPR020869">
    <property type="entry name" value="Rrp42_archaea"/>
</dbReference>
<dbReference type="NCBIfam" id="NF003282">
    <property type="entry name" value="PRK04282.1-1"/>
    <property type="match status" value="1"/>
</dbReference>
<dbReference type="PANTHER" id="PTHR11097:SF8">
    <property type="entry name" value="EXOSOME COMPLEX COMPONENT RRP42"/>
    <property type="match status" value="1"/>
</dbReference>
<dbReference type="PANTHER" id="PTHR11097">
    <property type="entry name" value="EXOSOME COMPLEX EXONUCLEASE RIBOSOMAL RNA PROCESSING PROTEIN"/>
    <property type="match status" value="1"/>
</dbReference>
<dbReference type="Pfam" id="PF01138">
    <property type="entry name" value="RNase_PH"/>
    <property type="match status" value="1"/>
</dbReference>
<dbReference type="Pfam" id="PF03725">
    <property type="entry name" value="RNase_PH_C"/>
    <property type="match status" value="1"/>
</dbReference>
<dbReference type="SUPFAM" id="SSF55666">
    <property type="entry name" value="Ribonuclease PH domain 2-like"/>
    <property type="match status" value="1"/>
</dbReference>
<dbReference type="SUPFAM" id="SSF54211">
    <property type="entry name" value="Ribosomal protein S5 domain 2-like"/>
    <property type="match status" value="1"/>
</dbReference>
<sequence>MSEDVIAEIKRDYIYSLANQGDRADGRKFDEFRAISVETGVINKAEGSARVKIGDSQVVVGVKIQPGEPFPDTPDSGVIITNLELVPLASPTFESGPPREDAIELARVVDRGVRESGAIDLSKLCIESGQKVWMVFIDVHVLDHDGNLMDAASLGAIAALKATKIPNSKFGLGEDVKLPLNDVPIGVTAVNIGGAIMLDPSLDEESVAPCKLTVITNKEGAISGMQKSGVGTLTPDQINHIIRLAKEKANVLREKLEGIQ</sequence>
<proteinExistence type="inferred from homology"/>
<organism>
    <name type="scientific">Methanocella arvoryzae (strain DSM 22066 / NBRC 105507 / MRE50)</name>
    <dbReference type="NCBI Taxonomy" id="351160"/>
    <lineage>
        <taxon>Archaea</taxon>
        <taxon>Methanobacteriati</taxon>
        <taxon>Methanobacteriota</taxon>
        <taxon>Stenosarchaea group</taxon>
        <taxon>Methanomicrobia</taxon>
        <taxon>Methanocellales</taxon>
        <taxon>Methanocellaceae</taxon>
        <taxon>Methanocella</taxon>
    </lineage>
</organism>
<comment type="function">
    <text evidence="1">Non-catalytic component of the exosome, which is a complex involved in RNA degradation. Contributes to the structuring of the Rrp41 active site.</text>
</comment>
<comment type="subunit">
    <text evidence="1">Component of the archaeal exosome complex. Forms a hexameric ring-like arrangement composed of 3 Rrp41-Rrp42 heterodimers. The hexameric ring associates with a trimer of Rrp4 and/or Csl4 subunits.</text>
</comment>
<comment type="subcellular location">
    <subcellularLocation>
        <location evidence="1">Cytoplasm</location>
    </subcellularLocation>
</comment>
<comment type="similarity">
    <text evidence="1">Belongs to the RNase PH family. Rrp42 subfamily.</text>
</comment>
<protein>
    <recommendedName>
        <fullName evidence="1">Exosome complex component Rrp42</fullName>
    </recommendedName>
</protein>
<reference key="1">
    <citation type="journal article" date="2006" name="Science">
        <title>Genome of rice cluster I archaea -- the key methane producers in the rice rhizosphere.</title>
        <authorList>
            <person name="Erkel C."/>
            <person name="Kube M."/>
            <person name="Reinhardt R."/>
            <person name="Liesack W."/>
        </authorList>
    </citation>
    <scope>NUCLEOTIDE SEQUENCE [LARGE SCALE GENOMIC DNA]</scope>
    <source>
        <strain>DSM 22066 / NBRC 105507 / MRE50</strain>
    </source>
</reference>
<evidence type="ECO:0000255" key="1">
    <source>
        <dbReference type="HAMAP-Rule" id="MF_00622"/>
    </source>
</evidence>
<name>RRP42_METAR</name>